<evidence type="ECO:0000250" key="1">
    <source>
        <dbReference type="UniProtKB" id="P18133"/>
    </source>
</evidence>
<evidence type="ECO:0000250" key="2">
    <source>
        <dbReference type="UniProtKB" id="P22253"/>
    </source>
</evidence>
<evidence type="ECO:0000250" key="3">
    <source>
        <dbReference type="UniProtKB" id="Q6XQN6"/>
    </source>
</evidence>
<evidence type="ECO:0000250" key="4">
    <source>
        <dbReference type="UniProtKB" id="Q9HJ28"/>
    </source>
</evidence>
<evidence type="ECO:0000305" key="5"/>
<evidence type="ECO:0000312" key="6">
    <source>
        <dbReference type="WormBase" id="Y54G2A.17a"/>
    </source>
</evidence>
<evidence type="ECO:0000312" key="7">
    <source>
        <dbReference type="WormBase" id="Y54G2A.17b"/>
    </source>
</evidence>
<evidence type="ECO:0000312" key="8">
    <source>
        <dbReference type="WormBase" id="Y54G2A.17c"/>
    </source>
</evidence>
<proteinExistence type="inferred from homology"/>
<accession>Q95XX1</accession>
<accession>Q8WTL1</accession>
<feature type="chain" id="PRO_0000315685" description="Nicotinate phosphoribosyltransferase">
    <location>
        <begin position="1"/>
        <end position="562"/>
    </location>
</feature>
<feature type="binding site" evidence="4">
    <location>
        <position position="36"/>
    </location>
    <ligand>
        <name>nicotinate</name>
        <dbReference type="ChEBI" id="CHEBI:32544"/>
    </ligand>
</feature>
<feature type="binding site" evidence="4">
    <location>
        <position position="183"/>
    </location>
    <ligand>
        <name>nicotinate</name>
        <dbReference type="ChEBI" id="CHEBI:32544"/>
    </ligand>
</feature>
<feature type="binding site" evidence="4">
    <location>
        <position position="225"/>
    </location>
    <ligand>
        <name>nicotinate</name>
        <dbReference type="ChEBI" id="CHEBI:32544"/>
    </ligand>
</feature>
<feature type="binding site" evidence="4">
    <location>
        <position position="397"/>
    </location>
    <ligand>
        <name>5-phospho-alpha-D-ribose 1-diphosphate</name>
        <dbReference type="ChEBI" id="CHEBI:58017"/>
    </ligand>
</feature>
<feature type="modified residue" description="Phosphohistidine" evidence="2">
    <location>
        <position position="228"/>
    </location>
</feature>
<feature type="splice variant" id="VSP_030613" description="In isoform a and isoform c." evidence="5">
    <location>
        <begin position="1"/>
        <end position="20"/>
    </location>
</feature>
<feature type="splice variant" id="VSP_042230" description="In isoform c." evidence="5">
    <original>LKVRLLNHKITNEKADLFQ</original>
    <variation>VEHYLSIMGDFALNSSLWF</variation>
    <location>
        <begin position="240"/>
        <end position="258"/>
    </location>
</feature>
<feature type="splice variant" id="VSP_042231" description="In isoform c." evidence="5">
    <location>
        <begin position="259"/>
        <end position="562"/>
    </location>
</feature>
<gene>
    <name evidence="7" type="primary">nprt-1</name>
    <name evidence="7" type="ORF">Y54G2A.17</name>
</gene>
<organism>
    <name type="scientific">Caenorhabditis elegans</name>
    <dbReference type="NCBI Taxonomy" id="6239"/>
    <lineage>
        <taxon>Eukaryota</taxon>
        <taxon>Metazoa</taxon>
        <taxon>Ecdysozoa</taxon>
        <taxon>Nematoda</taxon>
        <taxon>Chromadorea</taxon>
        <taxon>Rhabditida</taxon>
        <taxon>Rhabditina</taxon>
        <taxon>Rhabditomorpha</taxon>
        <taxon>Rhabditoidea</taxon>
        <taxon>Rhabditidae</taxon>
        <taxon>Peloderinae</taxon>
        <taxon>Caenorhabditis</taxon>
    </lineage>
</organism>
<dbReference type="EC" id="6.3.4.21" evidence="1"/>
<dbReference type="EMBL" id="FO081809">
    <property type="protein sequence ID" value="CCD83505.1"/>
    <property type="molecule type" value="Genomic_DNA"/>
</dbReference>
<dbReference type="EMBL" id="FO081809">
    <property type="protein sequence ID" value="CCD83544.1"/>
    <property type="molecule type" value="Genomic_DNA"/>
</dbReference>
<dbReference type="EMBL" id="FO081809">
    <property type="protein sequence ID" value="CCD83545.1"/>
    <property type="molecule type" value="Genomic_DNA"/>
</dbReference>
<dbReference type="RefSeq" id="NP_001023490.1">
    <property type="nucleotide sequence ID" value="NM_001028319.3"/>
</dbReference>
<dbReference type="RefSeq" id="NP_001368085.1">
    <molecule id="Q95XX1-3"/>
    <property type="nucleotide sequence ID" value="NM_001380118.1"/>
</dbReference>
<dbReference type="RefSeq" id="NP_001380099.1">
    <molecule id="Q95XX1-2"/>
    <property type="nucleotide sequence ID" value="NM_001392274.1"/>
</dbReference>
<dbReference type="RefSeq" id="NP_500264.4">
    <property type="nucleotide sequence ID" value="NM_067863.5"/>
</dbReference>
<dbReference type="RefSeq" id="NP_500265.3">
    <molecule id="Q95XX1-1"/>
    <property type="nucleotide sequence ID" value="NM_067864.6"/>
</dbReference>
<dbReference type="SMR" id="Q95XX1"/>
<dbReference type="BioGRID" id="42215">
    <property type="interactions" value="5"/>
</dbReference>
<dbReference type="DIP" id="DIP-59878N"/>
<dbReference type="FunCoup" id="Q95XX1">
    <property type="interactions" value="1482"/>
</dbReference>
<dbReference type="IntAct" id="Q95XX1">
    <property type="interactions" value="1"/>
</dbReference>
<dbReference type="STRING" id="6239.Y54G2A.17b.2"/>
<dbReference type="PaxDb" id="6239-Y54G2A.17b"/>
<dbReference type="PeptideAtlas" id="Q95XX1"/>
<dbReference type="EnsemblMetazoa" id="Y54G2A.17a.1">
    <molecule id="Q95XX1-2"/>
    <property type="protein sequence ID" value="Y54G2A.17a.1"/>
    <property type="gene ID" value="WBGene00021882"/>
</dbReference>
<dbReference type="EnsemblMetazoa" id="Y54G2A.17a.2">
    <molecule id="Q95XX1-2"/>
    <property type="protein sequence ID" value="Y54G2A.17a.2"/>
    <property type="gene ID" value="WBGene00021882"/>
</dbReference>
<dbReference type="EnsemblMetazoa" id="Y54G2A.17a.3">
    <molecule id="Q95XX1-2"/>
    <property type="protein sequence ID" value="Y54G2A.17a.3"/>
    <property type="gene ID" value="WBGene00021882"/>
</dbReference>
<dbReference type="EnsemblMetazoa" id="Y54G2A.17b.1">
    <molecule id="Q95XX1-1"/>
    <property type="protein sequence ID" value="Y54G2A.17b.1"/>
    <property type="gene ID" value="WBGene00021882"/>
</dbReference>
<dbReference type="EnsemblMetazoa" id="Y54G2A.17c.1">
    <molecule id="Q95XX1-3"/>
    <property type="protein sequence ID" value="Y54G2A.17c.1"/>
    <property type="gene ID" value="WBGene00021882"/>
</dbReference>
<dbReference type="GeneID" id="177070"/>
<dbReference type="KEGG" id="cel:CELE_Y54G2A.17"/>
<dbReference type="UCSC" id="Y54G2A.17a.1">
    <molecule id="Q95XX1-1"/>
    <property type="organism name" value="c. elegans"/>
</dbReference>
<dbReference type="AGR" id="WB:WBGene00021882"/>
<dbReference type="CTD" id="177070"/>
<dbReference type="WormBase" id="Y54G2A.17a">
    <molecule id="Q95XX1-2"/>
    <property type="protein sequence ID" value="CE46116"/>
    <property type="gene ID" value="WBGene00021882"/>
    <property type="gene designation" value="nprt-1"/>
</dbReference>
<dbReference type="WormBase" id="Y54G2A.17b">
    <molecule id="Q95XX1-1"/>
    <property type="protein sequence ID" value="CE46281"/>
    <property type="gene ID" value="WBGene00021882"/>
    <property type="gene designation" value="nprt-1"/>
</dbReference>
<dbReference type="WormBase" id="Y54G2A.17c">
    <molecule id="Q95XX1-3"/>
    <property type="protein sequence ID" value="CE33887"/>
    <property type="gene ID" value="WBGene00021882"/>
    <property type="gene designation" value="nprt-1"/>
</dbReference>
<dbReference type="eggNOG" id="KOG2511">
    <property type="taxonomic scope" value="Eukaryota"/>
</dbReference>
<dbReference type="GeneTree" id="ENSGT00940000153456"/>
<dbReference type="InParanoid" id="Q95XX1"/>
<dbReference type="OMA" id="VYFPGSP"/>
<dbReference type="OrthoDB" id="193380at2759"/>
<dbReference type="PhylomeDB" id="Q95XX1"/>
<dbReference type="Reactome" id="R-CEL-197264">
    <property type="pathway name" value="Nicotinamide salvaging"/>
</dbReference>
<dbReference type="Reactome" id="R-CEL-6798695">
    <property type="pathway name" value="Neutrophil degranulation"/>
</dbReference>
<dbReference type="UniPathway" id="UPA00253">
    <property type="reaction ID" value="UER00457"/>
</dbReference>
<dbReference type="PRO" id="PR:Q95XX1"/>
<dbReference type="Proteomes" id="UP000001940">
    <property type="component" value="Chromosome IV"/>
</dbReference>
<dbReference type="Bgee" id="WBGene00021882">
    <property type="expression patterns" value="Expressed in embryo and 4 other cell types or tissues"/>
</dbReference>
<dbReference type="GO" id="GO:0005829">
    <property type="term" value="C:cytosol"/>
    <property type="evidence" value="ECO:0000250"/>
    <property type="project" value="UniProtKB"/>
</dbReference>
<dbReference type="GO" id="GO:0046872">
    <property type="term" value="F:metal ion binding"/>
    <property type="evidence" value="ECO:0007669"/>
    <property type="project" value="UniProtKB-KW"/>
</dbReference>
<dbReference type="GO" id="GO:0004516">
    <property type="term" value="F:nicotinate phosphoribosyltransferase activity"/>
    <property type="evidence" value="ECO:0000250"/>
    <property type="project" value="UniProtKB"/>
</dbReference>
<dbReference type="GO" id="GO:0016740">
    <property type="term" value="F:transferase activity"/>
    <property type="evidence" value="ECO:0007669"/>
    <property type="project" value="UniProtKB-KW"/>
</dbReference>
<dbReference type="GO" id="GO:0034355">
    <property type="term" value="P:NAD biosynthetic process via the salvage pathway"/>
    <property type="evidence" value="ECO:0000318"/>
    <property type="project" value="GO_Central"/>
</dbReference>
<dbReference type="GO" id="GO:0006979">
    <property type="term" value="P:response to oxidative stress"/>
    <property type="evidence" value="ECO:0000250"/>
    <property type="project" value="UniProtKB"/>
</dbReference>
<dbReference type="CDD" id="cd01570">
    <property type="entry name" value="NAPRTase_A"/>
    <property type="match status" value="1"/>
</dbReference>
<dbReference type="FunFam" id="3.20.140.10:FF:000002">
    <property type="entry name" value="Nicotinate phosphoribosyltransferase"/>
    <property type="match status" value="1"/>
</dbReference>
<dbReference type="FunFam" id="3.20.140.10:FF:000006">
    <property type="entry name" value="Nicotinate phosphoribosyltransferase"/>
    <property type="match status" value="1"/>
</dbReference>
<dbReference type="FunFam" id="3.20.20.70:FF:000155">
    <property type="entry name" value="Nicotinate phosphoribosyltransferase"/>
    <property type="match status" value="1"/>
</dbReference>
<dbReference type="FunFam" id="3.20.20.70:FF:000173">
    <property type="entry name" value="Nicotinate phosphoribosyltransferase"/>
    <property type="match status" value="1"/>
</dbReference>
<dbReference type="Gene3D" id="3.20.20.70">
    <property type="entry name" value="Aldolase class I"/>
    <property type="match status" value="1"/>
</dbReference>
<dbReference type="Gene3D" id="3.20.140.10">
    <property type="entry name" value="nicotinate phosphoribosyltransferase"/>
    <property type="match status" value="2"/>
</dbReference>
<dbReference type="InterPro" id="IPR013785">
    <property type="entry name" value="Aldolase_TIM"/>
</dbReference>
<dbReference type="InterPro" id="IPR041525">
    <property type="entry name" value="N/Namide_PRibTrfase"/>
</dbReference>
<dbReference type="InterPro" id="IPR041619">
    <property type="entry name" value="NAPRTase_C"/>
</dbReference>
<dbReference type="InterPro" id="IPR040727">
    <property type="entry name" value="NAPRTase_N"/>
</dbReference>
<dbReference type="InterPro" id="IPR007229">
    <property type="entry name" value="Nic_PRibTrfase-Fam"/>
</dbReference>
<dbReference type="InterPro" id="IPR006405">
    <property type="entry name" value="Nic_PRibTrfase_pncB"/>
</dbReference>
<dbReference type="InterPro" id="IPR036068">
    <property type="entry name" value="Nicotinate_pribotase-like_C"/>
</dbReference>
<dbReference type="NCBIfam" id="TIGR01513">
    <property type="entry name" value="NAPRTase_put"/>
    <property type="match status" value="1"/>
</dbReference>
<dbReference type="PANTHER" id="PTHR11098">
    <property type="entry name" value="NICOTINATE PHOSPHORIBOSYLTRANSFERASE"/>
    <property type="match status" value="1"/>
</dbReference>
<dbReference type="PANTHER" id="PTHR11098:SF1">
    <property type="entry name" value="NICOTINATE PHOSPHORIBOSYLTRANSFERASE"/>
    <property type="match status" value="1"/>
</dbReference>
<dbReference type="Pfam" id="PF04095">
    <property type="entry name" value="NAPRTase"/>
    <property type="match status" value="1"/>
</dbReference>
<dbReference type="Pfam" id="PF17956">
    <property type="entry name" value="NAPRTase_C"/>
    <property type="match status" value="1"/>
</dbReference>
<dbReference type="Pfam" id="PF17767">
    <property type="entry name" value="NAPRTase_N"/>
    <property type="match status" value="1"/>
</dbReference>
<dbReference type="PIRSF" id="PIRSF000484">
    <property type="entry name" value="NAPRT"/>
    <property type="match status" value="1"/>
</dbReference>
<dbReference type="SUPFAM" id="SSF51690">
    <property type="entry name" value="Nicotinate/Quinolinate PRTase C-terminal domain-like"/>
    <property type="match status" value="1"/>
</dbReference>
<dbReference type="SUPFAM" id="SSF54675">
    <property type="entry name" value="Nicotinate/Quinolinate PRTase N-terminal domain-like"/>
    <property type="match status" value="1"/>
</dbReference>
<sequence length="562" mass="63347">MSFILPSESIDGTHPCNGLHMNGQDSLVQPLLTDFYQITMCYAYWKTGTHNEPAVFDVFFRKNPFQGEFTVFAGLEDCLRFVENFKFSQSDIDYVKKILPENAEPEFYEYLETLNGSHLTIEAVAEGSVVFPKVPLLTINGPLAMCQLIETSILNLVNYASLVATNAARFRQASGWKIQLLEFGLRRAQGPNGGLTASKYCYIGGFDATSNVLAGKLYGIPVKGTQAHSFICSFSSPAELKVRLLNHKITNEKADLFQISMEKRAWLLDQFSWKAALSEVSDGELSAFVAYAIAFPDTFLALIDTYDVIRSGVVNFVAVSLALHDLGYRSMGCRIDSGDLSYLSKELRECFVKVSTLKGEYKFFEKMSIVASNDINEETIMSLNDQQHEINAFGVGTHLVTCQKQPALGCVYKLVAQSAQPKIKLSQDVTKITIPGKKKCYRIFGKNGYAILDLMMLEDEPEPQPNQQILCRHPFEESKRALVNANKIIKLHNVYWKDGEMITPLPTLNEIKEHVNESIRSTLRQDHRRYLNPTPYKVSVSERLYQFLHTLWLQNAPIGQLE</sequence>
<name>PNCB_CAEEL</name>
<keyword id="KW-0025">Alternative splicing</keyword>
<keyword id="KW-0436">Ligase</keyword>
<keyword id="KW-0460">Magnesium</keyword>
<keyword id="KW-0464">Manganese</keyword>
<keyword id="KW-0479">Metal-binding</keyword>
<keyword id="KW-0597">Phosphoprotein</keyword>
<keyword id="KW-0662">Pyridine nucleotide biosynthesis</keyword>
<keyword id="KW-1185">Reference proteome</keyword>
<keyword id="KW-0808">Transferase</keyword>
<reference key="1">
    <citation type="journal article" date="1998" name="Science">
        <title>Genome sequence of the nematode C. elegans: a platform for investigating biology.</title>
        <authorList>
            <consortium name="The C. elegans sequencing consortium"/>
        </authorList>
    </citation>
    <scope>NUCLEOTIDE SEQUENCE [LARGE SCALE GENOMIC DNA]</scope>
    <scope>ALTERNATIVE SPLICING</scope>
    <source>
        <strain>Bristol N2</strain>
    </source>
</reference>
<protein>
    <recommendedName>
        <fullName evidence="1">Nicotinate phosphoribosyltransferase</fullName>
        <shortName evidence="1">NAPRTase</shortName>
        <ecNumber evidence="1">6.3.4.21</ecNumber>
    </recommendedName>
</protein>
<comment type="function">
    <text evidence="3">Catalyzes the first step in the biosynthesis of NAD from nicotinic acid, the ATP-dependent synthesis of beta-nicotinate D-ribonucleotide from nicotinate and 5-phospho-D-ribose 1-phosphate. Helps prevent cellular oxidative stress via its role in NAD biosynthesis.</text>
</comment>
<comment type="catalytic activity">
    <reaction evidence="3">
        <text>nicotinate + 5-phospho-alpha-D-ribose 1-diphosphate + ATP + H2O = nicotinate beta-D-ribonucleotide + ADP + phosphate + diphosphate</text>
        <dbReference type="Rhea" id="RHEA:36163"/>
        <dbReference type="ChEBI" id="CHEBI:15377"/>
        <dbReference type="ChEBI" id="CHEBI:30616"/>
        <dbReference type="ChEBI" id="CHEBI:32544"/>
        <dbReference type="ChEBI" id="CHEBI:33019"/>
        <dbReference type="ChEBI" id="CHEBI:43474"/>
        <dbReference type="ChEBI" id="CHEBI:57502"/>
        <dbReference type="ChEBI" id="CHEBI:58017"/>
        <dbReference type="ChEBI" id="CHEBI:456216"/>
        <dbReference type="EC" id="6.3.4.21"/>
    </reaction>
</comment>
<comment type="cofactor">
    <cofactor evidence="3">
        <name>Mg(2+)</name>
        <dbReference type="ChEBI" id="CHEBI:18420"/>
    </cofactor>
    <cofactor evidence="3">
        <name>Mn(2+)</name>
        <dbReference type="ChEBI" id="CHEBI:29035"/>
    </cofactor>
    <text evidence="3">Activity is highest with Mn(2+).</text>
</comment>
<comment type="pathway">
    <text evidence="3">Cofactor biosynthesis; NAD(+) biosynthesis; nicotinate D-ribonucleotide from nicotinate: step 1/1.</text>
</comment>
<comment type="alternative products">
    <event type="alternative splicing"/>
    <isoform>
        <id>Q95XX1-1</id>
        <name evidence="7">b</name>
        <sequence type="displayed"/>
    </isoform>
    <isoform>
        <id>Q95XX1-2</id>
        <name evidence="6">a</name>
        <sequence type="described" ref="VSP_030613"/>
    </isoform>
    <isoform>
        <id>Q95XX1-3</id>
        <name evidence="8">c</name>
        <sequence type="described" ref="VSP_030613 VSP_042230 VSP_042231"/>
    </isoform>
</comment>
<comment type="PTM">
    <text evidence="2">Transiently phosphorylated on a His residue during the reaction cycle. Phosphorylation strongly increases the affinity for substrates and increases the rate of nicotinate D-ribonucleotide production. Dephosphorylation regenerates the low-affinity form of the enzyme, leading to product release.</text>
</comment>
<comment type="similarity">
    <text evidence="5">Belongs to the NAPRTase family.</text>
</comment>